<feature type="chain" id="PRO_0000421753" description="Chanoclavine-I aldehyde reductase easA">
    <location>
        <begin position="1"/>
        <end position="376"/>
    </location>
</feature>
<feature type="active site" description="Proton donor" evidence="1">
    <location>
        <position position="178"/>
    </location>
</feature>
<feature type="binding site" evidence="12">
    <location>
        <begin position="29"/>
        <end position="31"/>
    </location>
    <ligand>
        <name>FMN</name>
        <dbReference type="ChEBI" id="CHEBI:58210"/>
    </ligand>
</feature>
<feature type="binding site" evidence="12">
    <location>
        <position position="64"/>
    </location>
    <ligand>
        <name>FMN</name>
        <dbReference type="ChEBI" id="CHEBI:58210"/>
    </ligand>
</feature>
<feature type="binding site" evidence="12">
    <location>
        <position position="106"/>
    </location>
    <ligand>
        <name>FMN</name>
        <dbReference type="ChEBI" id="CHEBI:58210"/>
    </ligand>
</feature>
<feature type="binding site" evidence="12">
    <location>
        <position position="173"/>
    </location>
    <ligand>
        <name>FMN</name>
        <dbReference type="ChEBI" id="CHEBI:58210"/>
    </ligand>
</feature>
<feature type="binding site" evidence="3">
    <location>
        <position position="173"/>
    </location>
    <ligand>
        <name>substrate</name>
    </ligand>
</feature>
<feature type="binding site" evidence="3">
    <location>
        <position position="176"/>
    </location>
    <ligand>
        <name>substrate</name>
    </ligand>
</feature>
<feature type="binding site" evidence="12">
    <location>
        <position position="225"/>
    </location>
    <ligand>
        <name>FMN</name>
        <dbReference type="ChEBI" id="CHEBI:58210"/>
    </ligand>
</feature>
<feature type="binding site" evidence="12">
    <location>
        <position position="297"/>
    </location>
    <ligand>
        <name>FMN</name>
        <dbReference type="ChEBI" id="CHEBI:58210"/>
    </ligand>
</feature>
<feature type="binding site" evidence="12">
    <location>
        <begin position="323"/>
        <end position="324"/>
    </location>
    <ligand>
        <name>FMN</name>
        <dbReference type="ChEBI" id="CHEBI:58210"/>
    </ligand>
</feature>
<feature type="binding site" evidence="3">
    <location>
        <position position="324"/>
    </location>
    <ligand>
        <name>FMN</name>
        <dbReference type="ChEBI" id="CHEBI:58210"/>
    </ligand>
</feature>
<feature type="binding site" evidence="3">
    <location>
        <position position="351"/>
    </location>
    <ligand>
        <name>substrate</name>
    </ligand>
</feature>
<feature type="helix" evidence="19">
    <location>
        <begin position="9"/>
        <end position="11"/>
    </location>
</feature>
<feature type="strand" evidence="19">
    <location>
        <begin position="14"/>
        <end position="16"/>
    </location>
</feature>
<feature type="strand" evidence="19">
    <location>
        <begin position="19"/>
        <end position="27"/>
    </location>
</feature>
<feature type="helix" evidence="19">
    <location>
        <begin position="45"/>
        <end position="52"/>
    </location>
</feature>
<feature type="strand" evidence="19">
    <location>
        <begin position="59"/>
        <end position="61"/>
    </location>
</feature>
<feature type="strand" evidence="19">
    <location>
        <begin position="65"/>
        <end position="68"/>
    </location>
</feature>
<feature type="turn" evidence="19">
    <location>
        <begin position="69"/>
        <end position="71"/>
    </location>
</feature>
<feature type="strand" evidence="19">
    <location>
        <begin position="79"/>
        <end position="82"/>
    </location>
</feature>
<feature type="helix" evidence="19">
    <location>
        <begin position="83"/>
        <end position="98"/>
    </location>
</feature>
<feature type="strand" evidence="19">
    <location>
        <begin position="102"/>
        <end position="108"/>
    </location>
</feature>
<feature type="helix" evidence="19">
    <location>
        <begin position="111"/>
        <end position="113"/>
    </location>
</feature>
<feature type="turn" evidence="19">
    <location>
        <begin position="116"/>
        <end position="118"/>
    </location>
</feature>
<feature type="strand" evidence="19">
    <location>
        <begin position="119"/>
        <end position="121"/>
    </location>
</feature>
<feature type="helix" evidence="19">
    <location>
        <begin position="122"/>
        <end position="124"/>
    </location>
</feature>
<feature type="strand" evidence="19">
    <location>
        <begin position="126"/>
        <end position="130"/>
    </location>
</feature>
<feature type="helix" evidence="19">
    <location>
        <begin position="145"/>
        <end position="164"/>
    </location>
</feature>
<feature type="strand" evidence="19">
    <location>
        <begin position="168"/>
        <end position="173"/>
    </location>
</feature>
<feature type="helix" evidence="19">
    <location>
        <begin position="179"/>
        <end position="184"/>
    </location>
</feature>
<feature type="turn" evidence="19">
    <location>
        <begin position="186"/>
        <end position="188"/>
    </location>
</feature>
<feature type="strand" evidence="19">
    <location>
        <begin position="196"/>
        <end position="198"/>
    </location>
</feature>
<feature type="helix" evidence="19">
    <location>
        <begin position="199"/>
        <end position="202"/>
    </location>
</feature>
<feature type="helix" evidence="19">
    <location>
        <begin position="204"/>
        <end position="217"/>
    </location>
</feature>
<feature type="helix" evidence="19">
    <location>
        <begin position="219"/>
        <end position="221"/>
    </location>
</feature>
<feature type="strand" evidence="19">
    <location>
        <begin position="222"/>
        <end position="226"/>
    </location>
</feature>
<feature type="helix" evidence="19">
    <location>
        <begin position="232"/>
        <end position="234"/>
    </location>
</feature>
<feature type="helix" evidence="19">
    <location>
        <begin position="241"/>
        <end position="255"/>
    </location>
</feature>
<feature type="strand" evidence="19">
    <location>
        <begin position="258"/>
        <end position="263"/>
    </location>
</feature>
<feature type="helix" evidence="19">
    <location>
        <begin position="280"/>
        <end position="286"/>
    </location>
</feature>
<feature type="strand" evidence="19">
    <location>
        <begin position="288"/>
        <end position="290"/>
    </location>
</feature>
<feature type="strand" evidence="19">
    <location>
        <begin position="292"/>
        <end position="297"/>
    </location>
</feature>
<feature type="helix" evidence="19">
    <location>
        <begin position="300"/>
        <end position="312"/>
    </location>
</feature>
<feature type="strand" evidence="19">
    <location>
        <begin position="318"/>
        <end position="323"/>
    </location>
</feature>
<feature type="helix" evidence="19">
    <location>
        <begin position="324"/>
        <end position="328"/>
    </location>
</feature>
<feature type="helix" evidence="19">
    <location>
        <begin position="332"/>
        <end position="338"/>
    </location>
</feature>
<feature type="helix" evidence="19">
    <location>
        <begin position="347"/>
        <end position="350"/>
    </location>
</feature>
<feature type="strand" evidence="19">
    <location>
        <begin position="354"/>
        <end position="356"/>
    </location>
</feature>
<feature type="turn" evidence="19">
    <location>
        <begin position="357"/>
        <end position="359"/>
    </location>
</feature>
<feature type="helix" evidence="19">
    <location>
        <begin position="366"/>
        <end position="370"/>
    </location>
</feature>
<proteinExistence type="evidence at protein level"/>
<organism>
    <name type="scientific">Aspergillus fumigatus (strain ATCC MYA-4609 / CBS 101355 / FGSC A1100 / Af293)</name>
    <name type="common">Neosartorya fumigata</name>
    <dbReference type="NCBI Taxonomy" id="330879"/>
    <lineage>
        <taxon>Eukaryota</taxon>
        <taxon>Fungi</taxon>
        <taxon>Dikarya</taxon>
        <taxon>Ascomycota</taxon>
        <taxon>Pezizomycotina</taxon>
        <taxon>Eurotiomycetes</taxon>
        <taxon>Eurotiomycetidae</taxon>
        <taxon>Eurotiales</taxon>
        <taxon>Aspergillaceae</taxon>
        <taxon>Aspergillus</taxon>
        <taxon>Aspergillus subgen. Fumigati</taxon>
    </lineage>
</organism>
<name>EASA_ASPFU</name>
<dbReference type="EC" id="1.3.1.100" evidence="8"/>
<dbReference type="EMBL" id="AAHF01000001">
    <property type="protein sequence ID" value="EAL94095.1"/>
    <property type="molecule type" value="Genomic_DNA"/>
</dbReference>
<dbReference type="RefSeq" id="XP_756133.1">
    <property type="nucleotide sequence ID" value="XM_751040.1"/>
</dbReference>
<dbReference type="PDB" id="4QNW">
    <property type="method" value="X-ray"/>
    <property type="resolution" value="1.80 A"/>
    <property type="chains" value="A=1-376"/>
</dbReference>
<dbReference type="PDBsum" id="4QNW"/>
<dbReference type="SMR" id="Q4WZ70"/>
<dbReference type="FunCoup" id="Q4WZ70">
    <property type="interactions" value="807"/>
</dbReference>
<dbReference type="STRING" id="330879.Q4WZ70"/>
<dbReference type="EnsemblFungi" id="EAL94095">
    <property type="protein sequence ID" value="EAL94095"/>
    <property type="gene ID" value="AFUA_2G17960"/>
</dbReference>
<dbReference type="GeneID" id="3512708"/>
<dbReference type="KEGG" id="afm:AFUA_2G17960"/>
<dbReference type="VEuPathDB" id="FungiDB:Afu2g17960"/>
<dbReference type="eggNOG" id="KOG0134">
    <property type="taxonomic scope" value="Eukaryota"/>
</dbReference>
<dbReference type="HOGENOM" id="CLU_012153_0_0_1"/>
<dbReference type="InParanoid" id="Q4WZ70"/>
<dbReference type="OMA" id="DQFWQDV"/>
<dbReference type="OrthoDB" id="276546at2759"/>
<dbReference type="BioCyc" id="MetaCyc:MONOMER-17452"/>
<dbReference type="BRENDA" id="1.3.1.100">
    <property type="organism ID" value="508"/>
</dbReference>
<dbReference type="UniPathway" id="UPA00327"/>
<dbReference type="EvolutionaryTrace" id="Q4WZ70"/>
<dbReference type="Proteomes" id="UP000002530">
    <property type="component" value="Chromosome 2"/>
</dbReference>
<dbReference type="GO" id="GO:0010181">
    <property type="term" value="F:FMN binding"/>
    <property type="evidence" value="ECO:0007669"/>
    <property type="project" value="InterPro"/>
</dbReference>
<dbReference type="GO" id="GO:0003959">
    <property type="term" value="F:NADPH dehydrogenase activity"/>
    <property type="evidence" value="ECO:0000318"/>
    <property type="project" value="GO_Central"/>
</dbReference>
<dbReference type="GO" id="GO:0016646">
    <property type="term" value="F:oxidoreductase activity, acting on the CH-NH group of donors, NAD or NADP as acceptor"/>
    <property type="evidence" value="ECO:0000304"/>
    <property type="project" value="UniProtKB"/>
</dbReference>
<dbReference type="GO" id="GO:0035837">
    <property type="term" value="P:ergot alkaloid biosynthetic process"/>
    <property type="evidence" value="ECO:0000314"/>
    <property type="project" value="UniProtKB"/>
</dbReference>
<dbReference type="GO" id="GO:1900809">
    <property type="term" value="P:fumigaclavine C biosynthetic process"/>
    <property type="evidence" value="ECO:0000314"/>
    <property type="project" value="GO_Central"/>
</dbReference>
<dbReference type="CDD" id="cd02933">
    <property type="entry name" value="OYE_like_FMN"/>
    <property type="match status" value="1"/>
</dbReference>
<dbReference type="FunFam" id="3.20.20.70:FF:000138">
    <property type="entry name" value="NADPH dehydrogenase 1"/>
    <property type="match status" value="1"/>
</dbReference>
<dbReference type="Gene3D" id="3.20.20.70">
    <property type="entry name" value="Aldolase class I"/>
    <property type="match status" value="1"/>
</dbReference>
<dbReference type="InterPro" id="IPR013785">
    <property type="entry name" value="Aldolase_TIM"/>
</dbReference>
<dbReference type="InterPro" id="IPR001155">
    <property type="entry name" value="OxRdtase_FMN_N"/>
</dbReference>
<dbReference type="InterPro" id="IPR045247">
    <property type="entry name" value="Oye-like"/>
</dbReference>
<dbReference type="PANTHER" id="PTHR22893">
    <property type="entry name" value="NADH OXIDOREDUCTASE-RELATED"/>
    <property type="match status" value="1"/>
</dbReference>
<dbReference type="PANTHER" id="PTHR22893:SF91">
    <property type="entry name" value="NADPH DEHYDROGENASE 2-RELATED"/>
    <property type="match status" value="1"/>
</dbReference>
<dbReference type="Pfam" id="PF00724">
    <property type="entry name" value="Oxidored_FMN"/>
    <property type="match status" value="1"/>
</dbReference>
<dbReference type="SUPFAM" id="SSF51395">
    <property type="entry name" value="FMN-linked oxidoreductases"/>
    <property type="match status" value="1"/>
</dbReference>
<protein>
    <recommendedName>
        <fullName evidence="17">Chanoclavine-I aldehyde reductase easA</fullName>
        <ecNumber evidence="8">1.3.1.100</ecNumber>
    </recommendedName>
    <alternativeName>
        <fullName evidence="16">Ergot alkaloid synthesis protein A</fullName>
    </alternativeName>
    <alternativeName>
        <fullName evidence="15">Old yellow enzyme 3 homolog</fullName>
    </alternativeName>
</protein>
<gene>
    <name evidence="16" type="primary">easA</name>
    <name evidence="14" type="synonym">fgaOx3</name>
    <name type="ORF">AFUA_2G17960</name>
</gene>
<comment type="function">
    <text evidence="2 4 6 7 8 9 10 11 13">Aldehyde reductase; part of the gene cluster that mediates the biosynthesis of fumiclavanine C, a fungal ergot alkaloid (PubMed:15933009, PubMed:22453123). DmaW catalyzes the first step of ergot alkaloid biosynthesis by condensing dimethylallyl diphosphate (DMAP) and tryptophan to form 4-dimethylallyl-L-tryptophan (PubMed:15870460). The second step is catalyzed by the methyltransferase easF that methylates 4-dimethylallyl-L-tryptophan in the presence of S-adenosyl-L-methionine, resulting in the formation of 4-dimethylallyl-L-abrine (By similarity). The catalase easC and the FAD-dependent oxidoreductase easE then transform 4-dimethylallyl-L-abrine to chanoclavine-I which is further oxidized by EasD in the presence of NAD(+), resulting in the formation of chanoclavine-I aldehyde (PubMed:20039019, PubMed:20526482, PubMed:21409592). EasA reduces chanoclavine-I aldehyde to dihydrochanoclavine-I aldehyde that spontaneously dehydrates to form 6,8-dimethyl-6,7-didehydroergoline (PubMed:20526482). EasG then catalyzes the reduction of 6,8-dimethyl-6,7-didehydroergoline to form festuclavine (PubMed:20526482). Hydrolysis of festuclavine by easM then leads to the formation of fumigaclavine B which is in turn acetylated by easN to fumigaclavine A (PubMed:26972831). Finally, easL catalyzes the conversion of fumigaclavine A into fumigaclavine C by attaching a dimethylallyl moiety to C-2 of the indole nucleus (PubMed:19672909).</text>
</comment>
<comment type="catalytic activity">
    <reaction evidence="8">
        <text>dihydrochanoclavine-I aldehyde + NADP(+) = chanoclavine-I aldehyde + NADPH + H(+)</text>
        <dbReference type="Rhea" id="RHEA:35947"/>
        <dbReference type="ChEBI" id="CHEBI:15378"/>
        <dbReference type="ChEBI" id="CHEBI:57783"/>
        <dbReference type="ChEBI" id="CHEBI:58349"/>
        <dbReference type="ChEBI" id="CHEBI:65032"/>
        <dbReference type="ChEBI" id="CHEBI:71487"/>
        <dbReference type="EC" id="1.3.1.100"/>
    </reaction>
</comment>
<comment type="cofactor">
    <cofactor evidence="12">
        <name>FMN</name>
        <dbReference type="ChEBI" id="CHEBI:58210"/>
    </cofactor>
</comment>
<comment type="pathway">
    <text evidence="8">Alkaloid biosynthesis; ergot alkaloid biosynthesis.</text>
</comment>
<comment type="induction">
    <text evidence="5">The expression of the ergot alkaloid synthesis cluster which leads to the synthesis of fumigaclavines is positively regulated by the brlA and stuA transcription factors (PubMed:19028996).</text>
</comment>
<comment type="biotechnology">
    <text evidence="18">Ergot alkaloids are known for their toxic effects on humans who consume contaminated grains or livestock that graze on grasses harboring ergot alkaloid-producing fungi (PubMed:19523108). Due to their strong affinity for monoamine neurotransmitter receptors they may also have clinical uses such as treatment of migraines, Parkinson's disease and cerebrovascular insufficiency (PubMed:19523108).</text>
</comment>
<comment type="similarity">
    <text evidence="17">Belongs to the NADH:flavin oxidoreductase/NADH oxidase family.</text>
</comment>
<accession>Q4WZ70</accession>
<evidence type="ECO:0000250" key="1"/>
<evidence type="ECO:0000250" key="2">
    <source>
        <dbReference type="UniProtKB" id="B6D5I7"/>
    </source>
</evidence>
<evidence type="ECO:0000250" key="3">
    <source>
        <dbReference type="UniProtKB" id="Q02899"/>
    </source>
</evidence>
<evidence type="ECO:0000269" key="4">
    <source>
    </source>
</evidence>
<evidence type="ECO:0000269" key="5">
    <source>
    </source>
</evidence>
<evidence type="ECO:0000269" key="6">
    <source>
    </source>
</evidence>
<evidence type="ECO:0000269" key="7">
    <source>
    </source>
</evidence>
<evidence type="ECO:0000269" key="8">
    <source>
    </source>
</evidence>
<evidence type="ECO:0000269" key="9">
    <source>
    </source>
</evidence>
<evidence type="ECO:0000269" key="10">
    <source>
    </source>
</evidence>
<evidence type="ECO:0000269" key="11">
    <source>
    </source>
</evidence>
<evidence type="ECO:0000269" key="12">
    <source>
    </source>
</evidence>
<evidence type="ECO:0000269" key="13">
    <source>
    </source>
</evidence>
<evidence type="ECO:0000303" key="14">
    <source>
    </source>
</evidence>
<evidence type="ECO:0000303" key="15">
    <source>
    </source>
</evidence>
<evidence type="ECO:0000303" key="16">
    <source>
    </source>
</evidence>
<evidence type="ECO:0000305" key="17"/>
<evidence type="ECO:0000305" key="18">
    <source>
    </source>
</evidence>
<evidence type="ECO:0007829" key="19">
    <source>
        <dbReference type="PDB" id="4QNW"/>
    </source>
</evidence>
<reference key="1">
    <citation type="journal article" date="2005" name="Nature">
        <title>Genomic sequence of the pathogenic and allergenic filamentous fungus Aspergillus fumigatus.</title>
        <authorList>
            <person name="Nierman W.C."/>
            <person name="Pain A."/>
            <person name="Anderson M.J."/>
            <person name="Wortman J.R."/>
            <person name="Kim H.S."/>
            <person name="Arroyo J."/>
            <person name="Berriman M."/>
            <person name="Abe K."/>
            <person name="Archer D.B."/>
            <person name="Bermejo C."/>
            <person name="Bennett J.W."/>
            <person name="Bowyer P."/>
            <person name="Chen D."/>
            <person name="Collins M."/>
            <person name="Coulsen R."/>
            <person name="Davies R."/>
            <person name="Dyer P.S."/>
            <person name="Farman M.L."/>
            <person name="Fedorova N."/>
            <person name="Fedorova N.D."/>
            <person name="Feldblyum T.V."/>
            <person name="Fischer R."/>
            <person name="Fosker N."/>
            <person name="Fraser A."/>
            <person name="Garcia J.L."/>
            <person name="Garcia M.J."/>
            <person name="Goble A."/>
            <person name="Goldman G.H."/>
            <person name="Gomi K."/>
            <person name="Griffith-Jones S."/>
            <person name="Gwilliam R."/>
            <person name="Haas B.J."/>
            <person name="Haas H."/>
            <person name="Harris D.E."/>
            <person name="Horiuchi H."/>
            <person name="Huang J."/>
            <person name="Humphray S."/>
            <person name="Jimenez J."/>
            <person name="Keller N."/>
            <person name="Khouri H."/>
            <person name="Kitamoto K."/>
            <person name="Kobayashi T."/>
            <person name="Konzack S."/>
            <person name="Kulkarni R."/>
            <person name="Kumagai T."/>
            <person name="Lafton A."/>
            <person name="Latge J.-P."/>
            <person name="Li W."/>
            <person name="Lord A."/>
            <person name="Lu C."/>
            <person name="Majoros W.H."/>
            <person name="May G.S."/>
            <person name="Miller B.L."/>
            <person name="Mohamoud Y."/>
            <person name="Molina M."/>
            <person name="Monod M."/>
            <person name="Mouyna I."/>
            <person name="Mulligan S."/>
            <person name="Murphy L.D."/>
            <person name="O'Neil S."/>
            <person name="Paulsen I."/>
            <person name="Penalva M.A."/>
            <person name="Pertea M."/>
            <person name="Price C."/>
            <person name="Pritchard B.L."/>
            <person name="Quail M.A."/>
            <person name="Rabbinowitsch E."/>
            <person name="Rawlins N."/>
            <person name="Rajandream M.A."/>
            <person name="Reichard U."/>
            <person name="Renauld H."/>
            <person name="Robson G.D."/>
            <person name="Rodriguez de Cordoba S."/>
            <person name="Rodriguez-Pena J.M."/>
            <person name="Ronning C.M."/>
            <person name="Rutter S."/>
            <person name="Salzberg S.L."/>
            <person name="Sanchez M."/>
            <person name="Sanchez-Ferrero J.C."/>
            <person name="Saunders D."/>
            <person name="Seeger K."/>
            <person name="Squares R."/>
            <person name="Squares S."/>
            <person name="Takeuchi M."/>
            <person name="Tekaia F."/>
            <person name="Turner G."/>
            <person name="Vazquez de Aldana C.R."/>
            <person name="Weidman J."/>
            <person name="White O."/>
            <person name="Woodward J.R."/>
            <person name="Yu J.-H."/>
            <person name="Fraser C.M."/>
            <person name="Galagan J.E."/>
            <person name="Asai K."/>
            <person name="Machida M."/>
            <person name="Hall N."/>
            <person name="Barrell B.G."/>
            <person name="Denning D.W."/>
        </authorList>
    </citation>
    <scope>NUCLEOTIDE SEQUENCE [LARGE SCALE GENOMIC DNA]</scope>
    <source>
        <strain>ATCC MYA-4609 / CBS 101355 / FGSC A1100 / Af293</strain>
    </source>
</reference>
<reference key="2">
    <citation type="journal article" date="2005" name="Appl. Environ. Microbiol.">
        <title>An ergot alkaloid biosynthesis gene and clustered hypothetical genes from Aspergillus fumigatus.</title>
        <authorList>
            <person name="Coyle C.M."/>
            <person name="Panaccione D.G."/>
        </authorList>
    </citation>
    <scope>IDENTIFICATION</scope>
    <scope>FUNCTION</scope>
</reference>
<reference key="3">
    <citation type="journal article" date="2005" name="Microbiology">
        <title>Overproduction, purification and characterization of FgaPT2, a dimethylallyltryptophan synthase from Aspergillus fumigatus.</title>
        <authorList>
            <person name="Unsoeld I.A."/>
            <person name="Li S.-M."/>
        </authorList>
    </citation>
    <scope>FUNCTION</scope>
</reference>
<reference key="4">
    <citation type="journal article" date="2009" name="ChemBioChem">
        <title>Ergot alkaloid biosynthesis in Aspergillus fumigatus: FgaAT catalyses the acetylation of fumigaclavine B.</title>
        <authorList>
            <person name="Liu X."/>
            <person name="Wang L."/>
            <person name="Steffan N."/>
            <person name="Yin W.B."/>
            <person name="Li S.M."/>
        </authorList>
    </citation>
    <scope>FUNCTION</scope>
</reference>
<reference key="5">
    <citation type="journal article" date="2009" name="Eukaryot. Cell">
        <title>Transcriptional profiling identifies a role for BrlA in the response to nitrogen depletion and for StuA in the regulation of secondary metabolite clusters in Aspergillus fumigatus.</title>
        <authorList>
            <person name="Twumasi-Boateng K."/>
            <person name="Yu Y."/>
            <person name="Chen D."/>
            <person name="Gravelat F.N."/>
            <person name="Nierman W.C."/>
            <person name="Sheppard D.C."/>
        </authorList>
    </citation>
    <scope>INDUCTION</scope>
</reference>
<reference key="6">
    <citation type="journal article" date="2009" name="Mol. Plant Pathol.">
        <title>Ergot: from witchcraft to biotechnology.</title>
        <authorList>
            <person name="Haarmann T."/>
            <person name="Rolke Y."/>
            <person name="Giesbert S."/>
            <person name="Tudzynski P."/>
        </authorList>
    </citation>
    <scope>BIOTECHNOLOGY</scope>
</reference>
<reference key="7">
    <citation type="journal article" date="2010" name="Arch. Microbiol.">
        <title>Ergot alkaloid biosynthesis in Aspergillus fumigatus: conversion of chanoclavine-I to chanoclavine-I aldehyde catalyzed by a short-chain alcohol dehydrogenase FgaDH.</title>
        <authorList>
            <person name="Wallwey C."/>
            <person name="Matuschek M."/>
            <person name="Li S.M."/>
        </authorList>
    </citation>
    <scope>FUNCTION</scope>
</reference>
<reference key="8">
    <citation type="journal article" date="2010" name="Org. Biomol. Chem.">
        <title>Ergot alkaloid biosynthesis in Aspergillus fumigatus: Conversion of chanoclavine-I aldehyde to festuclavine by the festuclavine synthase FgaFS in the presence of the old yellow enzyme FgaOx3.</title>
        <authorList>
            <person name="Wallwey C."/>
            <person name="Matuschek M."/>
            <person name="Xie X.L."/>
            <person name="Li S.M."/>
        </authorList>
    </citation>
    <scope>FUNCTION</scope>
    <scope>CATALYTIC ACTIVITY</scope>
    <scope>PATHWAY</scope>
    <scope>NOMENCLATURE</scope>
    <source>
        <strain>NIH 5233 / ATCC 13073</strain>
    </source>
</reference>
<reference key="9">
    <citation type="journal article" date="2011" name="Curr. Genet.">
        <title>Ergot cluster-encoded catalase is required for synthesis of chanoclavine-I in Aspergillus fumigatus.</title>
        <authorList>
            <person name="Goetz K.E."/>
            <person name="Coyle C.M."/>
            <person name="Cheng J.Z."/>
            <person name="O'Connor S.E."/>
            <person name="Panaccione D.G."/>
        </authorList>
    </citation>
    <scope>FUNCTION</scope>
</reference>
<reference key="10">
    <citation type="journal article" date="2011" name="Magn. Reson. Chem.">
        <title>Formyl migration product of chanoclavine-I aldehyde in the presence of the old yellow enzyme FgaOx3 from Aspergillus fumigatus: a NMR structure elucidation.</title>
        <authorList>
            <person name="Xie X."/>
            <person name="Wallwey C."/>
            <person name="Matuschek M."/>
            <person name="Steinbach K."/>
            <person name="Li S.M."/>
        </authorList>
    </citation>
    <scope>FUNCTION</scope>
    <source>
        <strain>NIH 5233 / ATCC 13073</strain>
    </source>
</reference>
<reference key="11">
    <citation type="journal article" date="2012" name="Mycologia">
        <title>Chemotypic and genotypic diversity in the ergot alkaloid pathway of Aspergillus fumigatus.</title>
        <authorList>
            <person name="Robinson S.L."/>
            <person name="Panaccione D.G."/>
        </authorList>
    </citation>
    <scope>IDENTIFICATION</scope>
    <scope>NOMENCLATURE</scope>
    <scope>FUNCTION</scope>
</reference>
<reference key="12">
    <citation type="journal article" date="2016" name="Curr. Genet.">
        <title>Functional analysis of the gene controlling hydroxylation of festuclavine in the ergot alkaloid pathway of Neosartorya fumigata.</title>
        <authorList>
            <person name="Bilovol Y."/>
            <person name="Panaccione D.G."/>
        </authorList>
    </citation>
    <scope>FUNCTION</scope>
</reference>
<reference key="13">
    <citation type="journal article" date="2014" name="Acta Crystallogr. F Struct. Biol. Commun.">
        <title>Structure of an Aspergillus fumigatus old yellow enzyme (EasA) involved in ergot alkaloid biosynthesis.</title>
        <authorList>
            <person name="Chilton A.S."/>
            <person name="Ellis A.L."/>
            <person name="Lamb A.L."/>
        </authorList>
    </citation>
    <scope>X-RAY CRYSTALLOGRAPHY (1.80 ANGSTROMS) IN COMPLEX WITH FMN</scope>
</reference>
<keyword id="KW-0002">3D-structure</keyword>
<keyword id="KW-0017">Alkaloid metabolism</keyword>
<keyword id="KW-0285">Flavoprotein</keyword>
<keyword id="KW-0288">FMN</keyword>
<keyword id="KW-0521">NADP</keyword>
<keyword id="KW-0560">Oxidoreductase</keyword>
<keyword id="KW-1185">Reference proteome</keyword>
<sequence length="376" mass="42186">MREEPSSAQLFKPLKVGRCHLQHRMIMAPTTRFRADGQGVPLPFVQEYYGQRASVPGTLLITEATDITPKAMGYKHVPGIWSEPQREAWREIVSRVHSKKCFIFCQLWATGRAADPDVLADMKDLISSSAVPVEEKGPLPRALTEDEIQQCIADFAQAARNAINAGFDGVEIHGANGYLIDQFTQKSCNHRQDRWGGSIENRARFAVEVTRAVIEAVGADRVGVKLSPYSQYLGMGTMDELVPQFEYLIAQMRRLDVAYLHLANSRWLDEEKPHPDPNHEVFVRVWGQSSPILLAGGYDAASAEKVTEQMAAATYTNVAIAFGRYFISTPDLPFRVMAGIQLQKYDRASFYSTLSREGYLDYPFSAEYMALHNFPV</sequence>